<feature type="chain" id="PRO_0000226798" description="JmjC domain-containing histone demethylation protein 1">
    <location>
        <begin position="1"/>
        <end position="478"/>
    </location>
</feature>
<feature type="domain" description="JmjC" evidence="3">
    <location>
        <begin position="242"/>
        <end position="401"/>
    </location>
</feature>
<feature type="zinc finger region" description="PHD-type">
    <location>
        <begin position="6"/>
        <end position="70"/>
    </location>
</feature>
<feature type="binding site" evidence="1">
    <location>
        <position position="294"/>
    </location>
    <ligand>
        <name>substrate</name>
    </ligand>
</feature>
<feature type="binding site" evidence="3">
    <location>
        <position position="297"/>
    </location>
    <ligand>
        <name>Fe cation</name>
        <dbReference type="ChEBI" id="CHEBI:24875"/>
        <note>catalytic</note>
    </ligand>
</feature>
<feature type="binding site" evidence="3">
    <location>
        <position position="299"/>
    </location>
    <ligand>
        <name>Fe cation</name>
        <dbReference type="ChEBI" id="CHEBI:24875"/>
        <note>catalytic</note>
    </ligand>
</feature>
<feature type="binding site" evidence="1">
    <location>
        <position position="314"/>
    </location>
    <ligand>
        <name>substrate</name>
    </ligand>
</feature>
<feature type="binding site" evidence="3">
    <location>
        <position position="369"/>
    </location>
    <ligand>
        <name>Fe cation</name>
        <dbReference type="ChEBI" id="CHEBI:24875"/>
        <note>catalytic</note>
    </ligand>
</feature>
<keyword id="KW-0156">Chromatin regulator</keyword>
<keyword id="KW-0223">Dioxygenase</keyword>
<keyword id="KW-0408">Iron</keyword>
<keyword id="KW-0479">Metal-binding</keyword>
<keyword id="KW-0539">Nucleus</keyword>
<keyword id="KW-0560">Oxidoreductase</keyword>
<keyword id="KW-1185">Reference proteome</keyword>
<keyword id="KW-0804">Transcription</keyword>
<keyword id="KW-0805">Transcription regulation</keyword>
<keyword id="KW-0862">Zinc</keyword>
<keyword id="KW-0863">Zinc-finger</keyword>
<accession>Q6CIC9</accession>
<proteinExistence type="inferred from homology"/>
<gene>
    <name type="primary">JHD1</name>
    <name type="ordered locus">KLLA0F27643g</name>
</gene>
<name>JHD1_KLULA</name>
<organism>
    <name type="scientific">Kluyveromyces lactis (strain ATCC 8585 / CBS 2359 / DSM 70799 / NBRC 1267 / NRRL Y-1140 / WM37)</name>
    <name type="common">Yeast</name>
    <name type="synonym">Candida sphaerica</name>
    <dbReference type="NCBI Taxonomy" id="284590"/>
    <lineage>
        <taxon>Eukaryota</taxon>
        <taxon>Fungi</taxon>
        <taxon>Dikarya</taxon>
        <taxon>Ascomycota</taxon>
        <taxon>Saccharomycotina</taxon>
        <taxon>Saccharomycetes</taxon>
        <taxon>Saccharomycetales</taxon>
        <taxon>Saccharomycetaceae</taxon>
        <taxon>Kluyveromyces</taxon>
    </lineage>
</organism>
<reference key="1">
    <citation type="journal article" date="2004" name="Nature">
        <title>Genome evolution in yeasts.</title>
        <authorList>
            <person name="Dujon B."/>
            <person name="Sherman D."/>
            <person name="Fischer G."/>
            <person name="Durrens P."/>
            <person name="Casaregola S."/>
            <person name="Lafontaine I."/>
            <person name="de Montigny J."/>
            <person name="Marck C."/>
            <person name="Neuveglise C."/>
            <person name="Talla E."/>
            <person name="Goffard N."/>
            <person name="Frangeul L."/>
            <person name="Aigle M."/>
            <person name="Anthouard V."/>
            <person name="Babour A."/>
            <person name="Barbe V."/>
            <person name="Barnay S."/>
            <person name="Blanchin S."/>
            <person name="Beckerich J.-M."/>
            <person name="Beyne E."/>
            <person name="Bleykasten C."/>
            <person name="Boisrame A."/>
            <person name="Boyer J."/>
            <person name="Cattolico L."/>
            <person name="Confanioleri F."/>
            <person name="de Daruvar A."/>
            <person name="Despons L."/>
            <person name="Fabre E."/>
            <person name="Fairhead C."/>
            <person name="Ferry-Dumazet H."/>
            <person name="Groppi A."/>
            <person name="Hantraye F."/>
            <person name="Hennequin C."/>
            <person name="Jauniaux N."/>
            <person name="Joyet P."/>
            <person name="Kachouri R."/>
            <person name="Kerrest A."/>
            <person name="Koszul R."/>
            <person name="Lemaire M."/>
            <person name="Lesur I."/>
            <person name="Ma L."/>
            <person name="Muller H."/>
            <person name="Nicaud J.-M."/>
            <person name="Nikolski M."/>
            <person name="Oztas S."/>
            <person name="Ozier-Kalogeropoulos O."/>
            <person name="Pellenz S."/>
            <person name="Potier S."/>
            <person name="Richard G.-F."/>
            <person name="Straub M.-L."/>
            <person name="Suleau A."/>
            <person name="Swennen D."/>
            <person name="Tekaia F."/>
            <person name="Wesolowski-Louvel M."/>
            <person name="Westhof E."/>
            <person name="Wirth B."/>
            <person name="Zeniou-Meyer M."/>
            <person name="Zivanovic Y."/>
            <person name="Bolotin-Fukuhara M."/>
            <person name="Thierry A."/>
            <person name="Bouchier C."/>
            <person name="Caudron B."/>
            <person name="Scarpelli C."/>
            <person name="Gaillardin C."/>
            <person name="Weissenbach J."/>
            <person name="Wincker P."/>
            <person name="Souciet J.-L."/>
        </authorList>
    </citation>
    <scope>NUCLEOTIDE SEQUENCE [LARGE SCALE GENOMIC DNA]</scope>
    <source>
        <strain>ATCC 8585 / CBS 2359 / DSM 70799 / NBRC 1267 / NRRL Y-1140 / WM37</strain>
    </source>
</reference>
<protein>
    <recommendedName>
        <fullName>JmjC domain-containing histone demethylation protein 1</fullName>
        <ecNumber evidence="2">1.14.11.27</ecNumber>
    </recommendedName>
    <alternativeName>
        <fullName>[Histone-H3]-lysine-36 demethylase 1</fullName>
    </alternativeName>
</protein>
<evidence type="ECO:0000250" key="1"/>
<evidence type="ECO:0000250" key="2">
    <source>
        <dbReference type="UniProtKB" id="P40034"/>
    </source>
</evidence>
<evidence type="ECO:0000255" key="3">
    <source>
        <dbReference type="PROSITE-ProRule" id="PRU00538"/>
    </source>
</evidence>
<evidence type="ECO:0000305" key="4"/>
<dbReference type="EC" id="1.14.11.27" evidence="2"/>
<dbReference type="EMBL" id="CR382126">
    <property type="protein sequence ID" value="CAG99018.1"/>
    <property type="molecule type" value="Genomic_DNA"/>
</dbReference>
<dbReference type="RefSeq" id="XP_456310.1">
    <property type="nucleotide sequence ID" value="XM_456310.1"/>
</dbReference>
<dbReference type="SMR" id="Q6CIC9"/>
<dbReference type="FunCoup" id="Q6CIC9">
    <property type="interactions" value="19"/>
</dbReference>
<dbReference type="STRING" id="284590.Q6CIC9"/>
<dbReference type="PaxDb" id="284590-Q6CIC9"/>
<dbReference type="KEGG" id="kla:KLLA0_F27643g"/>
<dbReference type="eggNOG" id="KOG1633">
    <property type="taxonomic scope" value="Eukaryota"/>
</dbReference>
<dbReference type="HOGENOM" id="CLU_003540_6_2_1"/>
<dbReference type="InParanoid" id="Q6CIC9"/>
<dbReference type="OMA" id="SQQNERW"/>
<dbReference type="Proteomes" id="UP000000598">
    <property type="component" value="Chromosome F"/>
</dbReference>
<dbReference type="GO" id="GO:0005634">
    <property type="term" value="C:nucleus"/>
    <property type="evidence" value="ECO:0007669"/>
    <property type="project" value="UniProtKB-SubCell"/>
</dbReference>
<dbReference type="GO" id="GO:0140680">
    <property type="term" value="F:histone H3K36me/H3K36me2 demethylase activity"/>
    <property type="evidence" value="ECO:0007669"/>
    <property type="project" value="UniProtKB-EC"/>
</dbReference>
<dbReference type="GO" id="GO:0008270">
    <property type="term" value="F:zinc ion binding"/>
    <property type="evidence" value="ECO:0007669"/>
    <property type="project" value="UniProtKB-KW"/>
</dbReference>
<dbReference type="Gene3D" id="2.60.120.650">
    <property type="entry name" value="Cupin"/>
    <property type="match status" value="1"/>
</dbReference>
<dbReference type="Gene3D" id="3.30.40.10">
    <property type="entry name" value="Zinc/RING finger domain, C3HC4 (zinc finger)"/>
    <property type="match status" value="1"/>
</dbReference>
<dbReference type="InterPro" id="IPR050690">
    <property type="entry name" value="JHDM1_Histone_Demethylase"/>
</dbReference>
<dbReference type="InterPro" id="IPR003347">
    <property type="entry name" value="JmjC_dom"/>
</dbReference>
<dbReference type="InterPro" id="IPR011011">
    <property type="entry name" value="Znf_FYVE_PHD"/>
</dbReference>
<dbReference type="InterPro" id="IPR001965">
    <property type="entry name" value="Znf_PHD"/>
</dbReference>
<dbReference type="InterPro" id="IPR013083">
    <property type="entry name" value="Znf_RING/FYVE/PHD"/>
</dbReference>
<dbReference type="PANTHER" id="PTHR23123">
    <property type="entry name" value="PHD/F-BOX CONTAINING PROTEIN"/>
    <property type="match status" value="1"/>
</dbReference>
<dbReference type="SMART" id="SM00558">
    <property type="entry name" value="JmjC"/>
    <property type="match status" value="1"/>
</dbReference>
<dbReference type="SMART" id="SM00249">
    <property type="entry name" value="PHD"/>
    <property type="match status" value="1"/>
</dbReference>
<dbReference type="SUPFAM" id="SSF51197">
    <property type="entry name" value="Clavaminate synthase-like"/>
    <property type="match status" value="1"/>
</dbReference>
<dbReference type="SUPFAM" id="SSF57903">
    <property type="entry name" value="FYVE/PHD zinc finger"/>
    <property type="match status" value="1"/>
</dbReference>
<dbReference type="PROSITE" id="PS51184">
    <property type="entry name" value="JMJC"/>
    <property type="match status" value="1"/>
</dbReference>
<comment type="function">
    <text evidence="2">Histone demethylase that specifically demethylates 'Lys-36' of histone H3, thereby playing a central role in histone code.</text>
</comment>
<comment type="catalytic activity">
    <reaction evidence="2">
        <text>N(6),N(6)-dimethyl-L-lysyl(36)-[histone H3] + 2 2-oxoglutarate + 2 O2 = L-lysyl(36)-[histone H3] + 2 formaldehyde + 2 succinate + 2 CO2</text>
        <dbReference type="Rhea" id="RHEA:42032"/>
        <dbReference type="Rhea" id="RHEA-COMP:9785"/>
        <dbReference type="Rhea" id="RHEA-COMP:9787"/>
        <dbReference type="ChEBI" id="CHEBI:15379"/>
        <dbReference type="ChEBI" id="CHEBI:16526"/>
        <dbReference type="ChEBI" id="CHEBI:16810"/>
        <dbReference type="ChEBI" id="CHEBI:16842"/>
        <dbReference type="ChEBI" id="CHEBI:29969"/>
        <dbReference type="ChEBI" id="CHEBI:30031"/>
        <dbReference type="ChEBI" id="CHEBI:61976"/>
        <dbReference type="EC" id="1.14.11.27"/>
    </reaction>
</comment>
<comment type="cofactor">
    <cofactor evidence="1">
        <name>Fe(2+)</name>
        <dbReference type="ChEBI" id="CHEBI:29033"/>
    </cofactor>
    <text evidence="1">Binds 1 Fe(2+) ion per subunit.</text>
</comment>
<comment type="subcellular location">
    <subcellularLocation>
        <location evidence="1">Nucleus</location>
    </subcellularLocation>
</comment>
<comment type="domain">
    <text evidence="1">The JmjC domain mediates the demethylation activity.</text>
</comment>
<comment type="similarity">
    <text evidence="4">Belongs to the JHDM1 histone demethylase family.</text>
</comment>
<sequence>MTSGTVKCHFCKKDDSEDKGQPIWVGCEFCDGWCHLTCVPIQFVVPKLENPSQLLAFKEKHVESFKCTLHDESKCALLKLNGVSVGTEDIAFTKRNRLRNKRPIDYIALNEGNDKRLKHEHPHTQAFLACFEKWKDPKAISSSELESDFQIIKVPLRVSDPADSGMYVISANELGLVDSKDHVKLNVEYLTKIMGDDYPLDVMDVQTQMNEKWTLSQWNEYYSHTSPSDRDRIRNVISLEVSHVESFKDGIRRPNAVNNNDLVDIVWNFGRTETDIERPKVTKYILMSVGNAYTDFHLDFAGTSVYYNVISGSKKFILFPPTDYNLKKYREWCDNDNQNDIFLGDQLEAGIAMELTEGNLFMIPCGYIHAVYTPEDSFIVGGNFLTLRDITTQLNVVEIEHQTKVPKKFTFPQFESVMGKTCEWLLNSDHIQSISSEDIENLVKYLSSSNIKYKPINYQSKKELITELKNKIIKFEHT</sequence>